<sequence>MKKKAVLAEKPSVARDIARVLGCNQKGNGYLEGNGYIITWALGHLVTHADPEHYGKQYKTWKLEELPMLPKRLELVVIKQTAKQFHAVKHVLNRQDVGEVVIATDAGREGELVARWILEKAHVKKPVKRLWISSVTDKAIKDGFKQLKDGKRYETLYAAAAARAEADWYVGINGTRALTTKHNAQLSCGRVQTPTLAILADREEAIRKFVPKPYHTISVETKDGVTFRWADRRSKEERIFDDKRAKTLQEKLQQSAIVIDSVNAKTKRTPPPPLYDLTELQREANKRFGYSAKETLAALQRLYEQHKAVTYPRTDSRYLSSDLVETLKERLHAVDVQPFRKMVANAKKQGLANAKRQMVNDAKVSDHHALIPTEQPQSASAMSDKEAKLYHLIVRRFLANFFPPSESELTSVEATANGELLRAKGERLVSAGWRGQETGEEDEALARLLPAMSKGDKKAVKWVGMTQGKTSPPPRFNEGTLLAAMEKPAQHMEAKDETIKKTLAQAGGIGTVATRADIIEKLFSSFYIEKKGKDLYITSKGKQLLELVPAELKSPALTAEWEQRLEKIVQGKEQKQMFIAEMKEYAKAVVAQVKADTATFRHDNKTGEKCPECGKFLLEVNGKKGKMRVCQDRECGYRKNIAMTTNARCPKCKKKLELRGEGEGQVFACVCGHREKKAQFEQRRKQNKHKNVSKREVQSYMKKQNKQDQFANSALADQLAKLGLKGDDS</sequence>
<reference key="1">
    <citation type="submission" date="2003-10" db="EMBL/GenBank/DDBJ databases">
        <title>The complete genome sequence of the alkaliphilic Bacillus clausii KSM-K16.</title>
        <authorList>
            <person name="Takaki Y."/>
            <person name="Kageyama Y."/>
            <person name="Shimamura S."/>
            <person name="Suzuki H."/>
            <person name="Nishi S."/>
            <person name="Hatada Y."/>
            <person name="Kawai S."/>
            <person name="Ito S."/>
            <person name="Horikoshi K."/>
        </authorList>
    </citation>
    <scope>NUCLEOTIDE SEQUENCE [LARGE SCALE GENOMIC DNA]</scope>
    <source>
        <strain>KSM-K16</strain>
    </source>
</reference>
<comment type="function">
    <text evidence="1">Releases the supercoiling and torsional tension of DNA, which is introduced during the DNA replication and transcription, by transiently cleaving and rejoining one strand of the DNA duplex. Introduces a single-strand break via transesterification at a target site in duplex DNA. The scissile phosphodiester is attacked by the catalytic tyrosine of the enzyme, resulting in the formation of a DNA-(5'-phosphotyrosyl)-enzyme intermediate and the expulsion of a 3'-OH DNA strand. The free DNA strand then undergoes passage around the unbroken strand, thus removing DNA supercoils. Finally, in the religation step, the DNA 3'-OH attacks the covalent intermediate to expel the active-site tyrosine and restore the DNA phosphodiester backbone.</text>
</comment>
<comment type="catalytic activity">
    <reaction evidence="1">
        <text>ATP-independent breakage of single-stranded DNA, followed by passage and rejoining.</text>
        <dbReference type="EC" id="5.6.2.1"/>
    </reaction>
</comment>
<comment type="cofactor">
    <cofactor evidence="1">
        <name>Mg(2+)</name>
        <dbReference type="ChEBI" id="CHEBI:18420"/>
    </cofactor>
</comment>
<comment type="similarity">
    <text evidence="1 2">Belongs to the type IA topoisomerase family.</text>
</comment>
<evidence type="ECO:0000255" key="1">
    <source>
        <dbReference type="HAMAP-Rule" id="MF_00953"/>
    </source>
</evidence>
<evidence type="ECO:0000255" key="2">
    <source>
        <dbReference type="PROSITE-ProRule" id="PRU01383"/>
    </source>
</evidence>
<evidence type="ECO:0000256" key="3">
    <source>
        <dbReference type="SAM" id="MobiDB-lite"/>
    </source>
</evidence>
<accession>Q5WAX6</accession>
<protein>
    <recommendedName>
        <fullName evidence="1">DNA topoisomerase 3</fullName>
        <ecNumber evidence="1">5.6.2.1</ecNumber>
    </recommendedName>
    <alternativeName>
        <fullName evidence="1">DNA topoisomerase III</fullName>
    </alternativeName>
</protein>
<feature type="chain" id="PRO_0000286365" description="DNA topoisomerase 3">
    <location>
        <begin position="1"/>
        <end position="729"/>
    </location>
</feature>
<feature type="domain" description="Toprim" evidence="1">
    <location>
        <begin position="3"/>
        <end position="136"/>
    </location>
</feature>
<feature type="domain" description="Topo IA-type catalytic" evidence="2">
    <location>
        <begin position="153"/>
        <end position="590"/>
    </location>
</feature>
<feature type="region of interest" description="Interaction with DNA" evidence="1">
    <location>
        <begin position="187"/>
        <end position="192"/>
    </location>
</feature>
<feature type="region of interest" description="Disordered" evidence="3">
    <location>
        <begin position="680"/>
        <end position="708"/>
    </location>
</feature>
<feature type="active site" description="O-(5'-phospho-DNA)-tyrosine intermediate" evidence="2">
    <location>
        <position position="311"/>
    </location>
</feature>
<feature type="binding site" evidence="1">
    <location>
        <position position="9"/>
    </location>
    <ligand>
        <name>Mg(2+)</name>
        <dbReference type="ChEBI" id="CHEBI:18420"/>
        <note>catalytic</note>
    </ligand>
</feature>
<feature type="binding site" evidence="1">
    <location>
        <position position="105"/>
    </location>
    <ligand>
        <name>Mg(2+)</name>
        <dbReference type="ChEBI" id="CHEBI:18420"/>
        <note>catalytic</note>
    </ligand>
</feature>
<feature type="site" description="Interaction with DNA" evidence="1">
    <location>
        <position position="61"/>
    </location>
</feature>
<feature type="site" description="Interaction with DNA" evidence="1">
    <location>
        <position position="168"/>
    </location>
</feature>
<feature type="site" description="Interaction with DNA" evidence="1">
    <location>
        <position position="176"/>
    </location>
</feature>
<feature type="site" description="Interaction with DNA" evidence="1">
    <location>
        <position position="313"/>
    </location>
</feature>
<name>TOP3_SHOC1</name>
<gene>
    <name evidence="1" type="primary">topB</name>
    <name type="ordered locus">ABC3953</name>
</gene>
<organism>
    <name type="scientific">Shouchella clausii (strain KSM-K16)</name>
    <name type="common">Alkalihalobacillus clausii</name>
    <dbReference type="NCBI Taxonomy" id="66692"/>
    <lineage>
        <taxon>Bacteria</taxon>
        <taxon>Bacillati</taxon>
        <taxon>Bacillota</taxon>
        <taxon>Bacilli</taxon>
        <taxon>Bacillales</taxon>
        <taxon>Bacillaceae</taxon>
        <taxon>Shouchella</taxon>
    </lineage>
</organism>
<proteinExistence type="inferred from homology"/>
<keyword id="KW-0238">DNA-binding</keyword>
<keyword id="KW-0413">Isomerase</keyword>
<keyword id="KW-0460">Magnesium</keyword>
<keyword id="KW-0479">Metal-binding</keyword>
<keyword id="KW-1185">Reference proteome</keyword>
<keyword id="KW-0799">Topoisomerase</keyword>
<dbReference type="EC" id="5.6.2.1" evidence="1"/>
<dbReference type="EMBL" id="AP006627">
    <property type="protein sequence ID" value="BAD66484.1"/>
    <property type="molecule type" value="Genomic_DNA"/>
</dbReference>
<dbReference type="RefSeq" id="WP_011248787.1">
    <property type="nucleotide sequence ID" value="NC_006582.1"/>
</dbReference>
<dbReference type="SMR" id="Q5WAX6"/>
<dbReference type="STRING" id="66692.ABC3953"/>
<dbReference type="KEGG" id="bcl:ABC3953"/>
<dbReference type="eggNOG" id="COG0550">
    <property type="taxonomic scope" value="Bacteria"/>
</dbReference>
<dbReference type="eggNOG" id="COG0551">
    <property type="taxonomic scope" value="Bacteria"/>
</dbReference>
<dbReference type="HOGENOM" id="CLU_002929_5_2_9"/>
<dbReference type="OrthoDB" id="9803554at2"/>
<dbReference type="Proteomes" id="UP000001168">
    <property type="component" value="Chromosome"/>
</dbReference>
<dbReference type="GO" id="GO:0043597">
    <property type="term" value="C:cytoplasmic replication fork"/>
    <property type="evidence" value="ECO:0007669"/>
    <property type="project" value="TreeGrafter"/>
</dbReference>
<dbReference type="GO" id="GO:0003677">
    <property type="term" value="F:DNA binding"/>
    <property type="evidence" value="ECO:0007669"/>
    <property type="project" value="UniProtKB-KW"/>
</dbReference>
<dbReference type="GO" id="GO:0003917">
    <property type="term" value="F:DNA topoisomerase type I (single strand cut, ATP-independent) activity"/>
    <property type="evidence" value="ECO:0007669"/>
    <property type="project" value="UniProtKB-UniRule"/>
</dbReference>
<dbReference type="GO" id="GO:0000287">
    <property type="term" value="F:magnesium ion binding"/>
    <property type="evidence" value="ECO:0007669"/>
    <property type="project" value="UniProtKB-UniRule"/>
</dbReference>
<dbReference type="GO" id="GO:0006310">
    <property type="term" value="P:DNA recombination"/>
    <property type="evidence" value="ECO:0007669"/>
    <property type="project" value="TreeGrafter"/>
</dbReference>
<dbReference type="GO" id="GO:0006281">
    <property type="term" value="P:DNA repair"/>
    <property type="evidence" value="ECO:0007669"/>
    <property type="project" value="TreeGrafter"/>
</dbReference>
<dbReference type="GO" id="GO:0006265">
    <property type="term" value="P:DNA topological change"/>
    <property type="evidence" value="ECO:0007669"/>
    <property type="project" value="UniProtKB-UniRule"/>
</dbReference>
<dbReference type="CDD" id="cd00186">
    <property type="entry name" value="TOP1Ac"/>
    <property type="match status" value="1"/>
</dbReference>
<dbReference type="CDD" id="cd03362">
    <property type="entry name" value="TOPRIM_TopoIA_TopoIII"/>
    <property type="match status" value="1"/>
</dbReference>
<dbReference type="Gene3D" id="3.40.50.140">
    <property type="match status" value="1"/>
</dbReference>
<dbReference type="Gene3D" id="1.10.460.10">
    <property type="entry name" value="Topoisomerase I, domain 2"/>
    <property type="match status" value="1"/>
</dbReference>
<dbReference type="Gene3D" id="2.70.20.10">
    <property type="entry name" value="Topoisomerase I, domain 3"/>
    <property type="match status" value="1"/>
</dbReference>
<dbReference type="Gene3D" id="1.10.290.10">
    <property type="entry name" value="Topoisomerase I, domain 4"/>
    <property type="match status" value="1"/>
</dbReference>
<dbReference type="HAMAP" id="MF_00953">
    <property type="entry name" value="Topoisom_3_prok"/>
    <property type="match status" value="1"/>
</dbReference>
<dbReference type="InterPro" id="IPR000380">
    <property type="entry name" value="Topo_IA"/>
</dbReference>
<dbReference type="InterPro" id="IPR003601">
    <property type="entry name" value="Topo_IA_2"/>
</dbReference>
<dbReference type="InterPro" id="IPR023406">
    <property type="entry name" value="Topo_IA_AS"/>
</dbReference>
<dbReference type="InterPro" id="IPR013497">
    <property type="entry name" value="Topo_IA_cen"/>
</dbReference>
<dbReference type="InterPro" id="IPR013824">
    <property type="entry name" value="Topo_IA_cen_sub1"/>
</dbReference>
<dbReference type="InterPro" id="IPR013825">
    <property type="entry name" value="Topo_IA_cen_sub2"/>
</dbReference>
<dbReference type="InterPro" id="IPR013826">
    <property type="entry name" value="Topo_IA_cen_sub3"/>
</dbReference>
<dbReference type="InterPro" id="IPR023405">
    <property type="entry name" value="Topo_IA_core_domain"/>
</dbReference>
<dbReference type="InterPro" id="IPR003602">
    <property type="entry name" value="Topo_IA_DNA-bd_dom"/>
</dbReference>
<dbReference type="InterPro" id="IPR005738">
    <property type="entry name" value="TopoIII"/>
</dbReference>
<dbReference type="InterPro" id="IPR006171">
    <property type="entry name" value="TOPRIM_dom"/>
</dbReference>
<dbReference type="InterPro" id="IPR034144">
    <property type="entry name" value="TOPRIM_TopoIII"/>
</dbReference>
<dbReference type="NCBIfam" id="NF005829">
    <property type="entry name" value="PRK07726.1"/>
    <property type="match status" value="1"/>
</dbReference>
<dbReference type="NCBIfam" id="TIGR01056">
    <property type="entry name" value="topB"/>
    <property type="match status" value="1"/>
</dbReference>
<dbReference type="PANTHER" id="PTHR11390:SF21">
    <property type="entry name" value="DNA TOPOISOMERASE 3-ALPHA"/>
    <property type="match status" value="1"/>
</dbReference>
<dbReference type="PANTHER" id="PTHR11390">
    <property type="entry name" value="PROKARYOTIC DNA TOPOISOMERASE"/>
    <property type="match status" value="1"/>
</dbReference>
<dbReference type="Pfam" id="PF01131">
    <property type="entry name" value="Topoisom_bac"/>
    <property type="match status" value="1"/>
</dbReference>
<dbReference type="Pfam" id="PF01751">
    <property type="entry name" value="Toprim"/>
    <property type="match status" value="1"/>
</dbReference>
<dbReference type="PRINTS" id="PR00417">
    <property type="entry name" value="PRTPISMRASEI"/>
</dbReference>
<dbReference type="SMART" id="SM00437">
    <property type="entry name" value="TOP1Ac"/>
    <property type="match status" value="1"/>
</dbReference>
<dbReference type="SMART" id="SM00436">
    <property type="entry name" value="TOP1Bc"/>
    <property type="match status" value="1"/>
</dbReference>
<dbReference type="SMART" id="SM00493">
    <property type="entry name" value="TOPRIM"/>
    <property type="match status" value="1"/>
</dbReference>
<dbReference type="SUPFAM" id="SSF56712">
    <property type="entry name" value="Prokaryotic type I DNA topoisomerase"/>
    <property type="match status" value="1"/>
</dbReference>
<dbReference type="PROSITE" id="PS00396">
    <property type="entry name" value="TOPO_IA_1"/>
    <property type="match status" value="1"/>
</dbReference>
<dbReference type="PROSITE" id="PS52039">
    <property type="entry name" value="TOPO_IA_2"/>
    <property type="match status" value="1"/>
</dbReference>
<dbReference type="PROSITE" id="PS50880">
    <property type="entry name" value="TOPRIM"/>
    <property type="match status" value="1"/>
</dbReference>